<name>SECA1_LACJO</name>
<keyword id="KW-0067">ATP-binding</keyword>
<keyword id="KW-1003">Cell membrane</keyword>
<keyword id="KW-0963">Cytoplasm</keyword>
<keyword id="KW-0472">Membrane</keyword>
<keyword id="KW-0547">Nucleotide-binding</keyword>
<keyword id="KW-0653">Protein transport</keyword>
<keyword id="KW-1278">Translocase</keyword>
<keyword id="KW-0811">Translocation</keyword>
<keyword id="KW-0813">Transport</keyword>
<dbReference type="EC" id="7.4.2.8" evidence="1"/>
<dbReference type="EMBL" id="AE017198">
    <property type="protein sequence ID" value="AAS08667.1"/>
    <property type="molecule type" value="Genomic_DNA"/>
</dbReference>
<dbReference type="RefSeq" id="WP_011161764.1">
    <property type="nucleotide sequence ID" value="NC_005362.1"/>
</dbReference>
<dbReference type="SMR" id="Q74KA5"/>
<dbReference type="KEGG" id="ljo:LJ_0846"/>
<dbReference type="PATRIC" id="fig|257314.6.peg.703"/>
<dbReference type="eggNOG" id="COG0653">
    <property type="taxonomic scope" value="Bacteria"/>
</dbReference>
<dbReference type="HOGENOM" id="CLU_005314_3_2_9"/>
<dbReference type="Proteomes" id="UP000000581">
    <property type="component" value="Chromosome"/>
</dbReference>
<dbReference type="GO" id="GO:0031522">
    <property type="term" value="C:cell envelope Sec protein transport complex"/>
    <property type="evidence" value="ECO:0007669"/>
    <property type="project" value="TreeGrafter"/>
</dbReference>
<dbReference type="GO" id="GO:0005829">
    <property type="term" value="C:cytosol"/>
    <property type="evidence" value="ECO:0007669"/>
    <property type="project" value="TreeGrafter"/>
</dbReference>
<dbReference type="GO" id="GO:0005886">
    <property type="term" value="C:plasma membrane"/>
    <property type="evidence" value="ECO:0007669"/>
    <property type="project" value="UniProtKB-SubCell"/>
</dbReference>
<dbReference type="GO" id="GO:0005524">
    <property type="term" value="F:ATP binding"/>
    <property type="evidence" value="ECO:0007669"/>
    <property type="project" value="UniProtKB-UniRule"/>
</dbReference>
<dbReference type="GO" id="GO:0008564">
    <property type="term" value="F:protein-exporting ATPase activity"/>
    <property type="evidence" value="ECO:0007669"/>
    <property type="project" value="UniProtKB-EC"/>
</dbReference>
<dbReference type="GO" id="GO:0065002">
    <property type="term" value="P:intracellular protein transmembrane transport"/>
    <property type="evidence" value="ECO:0007669"/>
    <property type="project" value="UniProtKB-UniRule"/>
</dbReference>
<dbReference type="GO" id="GO:0017038">
    <property type="term" value="P:protein import"/>
    <property type="evidence" value="ECO:0007669"/>
    <property type="project" value="InterPro"/>
</dbReference>
<dbReference type="GO" id="GO:0006605">
    <property type="term" value="P:protein targeting"/>
    <property type="evidence" value="ECO:0007669"/>
    <property type="project" value="UniProtKB-UniRule"/>
</dbReference>
<dbReference type="GO" id="GO:0043952">
    <property type="term" value="P:protein transport by the Sec complex"/>
    <property type="evidence" value="ECO:0007669"/>
    <property type="project" value="TreeGrafter"/>
</dbReference>
<dbReference type="CDD" id="cd17928">
    <property type="entry name" value="DEXDc_SecA"/>
    <property type="match status" value="1"/>
</dbReference>
<dbReference type="CDD" id="cd18803">
    <property type="entry name" value="SF2_C_secA"/>
    <property type="match status" value="1"/>
</dbReference>
<dbReference type="FunFam" id="3.40.50.300:FF:000429">
    <property type="entry name" value="Preprotein translocase subunit SecA"/>
    <property type="match status" value="1"/>
</dbReference>
<dbReference type="FunFam" id="3.90.1440.10:FF:000001">
    <property type="entry name" value="Preprotein translocase subunit SecA"/>
    <property type="match status" value="1"/>
</dbReference>
<dbReference type="Gene3D" id="1.10.3060.10">
    <property type="entry name" value="Helical scaffold and wing domains of SecA"/>
    <property type="match status" value="1"/>
</dbReference>
<dbReference type="Gene3D" id="3.40.50.300">
    <property type="entry name" value="P-loop containing nucleotide triphosphate hydrolases"/>
    <property type="match status" value="3"/>
</dbReference>
<dbReference type="Gene3D" id="3.90.1440.10">
    <property type="entry name" value="SecA, preprotein cross-linking domain"/>
    <property type="match status" value="1"/>
</dbReference>
<dbReference type="HAMAP" id="MF_01382">
    <property type="entry name" value="SecA"/>
    <property type="match status" value="1"/>
</dbReference>
<dbReference type="InterPro" id="IPR014001">
    <property type="entry name" value="Helicase_ATP-bd"/>
</dbReference>
<dbReference type="InterPro" id="IPR001650">
    <property type="entry name" value="Helicase_C-like"/>
</dbReference>
<dbReference type="InterPro" id="IPR027417">
    <property type="entry name" value="P-loop_NTPase"/>
</dbReference>
<dbReference type="InterPro" id="IPR000185">
    <property type="entry name" value="SecA"/>
</dbReference>
<dbReference type="InterPro" id="IPR020937">
    <property type="entry name" value="SecA_CS"/>
</dbReference>
<dbReference type="InterPro" id="IPR011115">
    <property type="entry name" value="SecA_DEAD"/>
</dbReference>
<dbReference type="InterPro" id="IPR014018">
    <property type="entry name" value="SecA_motor_DEAD"/>
</dbReference>
<dbReference type="InterPro" id="IPR011130">
    <property type="entry name" value="SecA_preprotein_X-link_dom"/>
</dbReference>
<dbReference type="InterPro" id="IPR044722">
    <property type="entry name" value="SecA_SF2_C"/>
</dbReference>
<dbReference type="InterPro" id="IPR011116">
    <property type="entry name" value="SecA_Wing/Scaffold"/>
</dbReference>
<dbReference type="InterPro" id="IPR036266">
    <property type="entry name" value="SecA_Wing/Scaffold_sf"/>
</dbReference>
<dbReference type="InterPro" id="IPR036670">
    <property type="entry name" value="SecA_X-link_sf"/>
</dbReference>
<dbReference type="NCBIfam" id="NF006630">
    <property type="entry name" value="PRK09200.1"/>
    <property type="match status" value="1"/>
</dbReference>
<dbReference type="NCBIfam" id="NF009538">
    <property type="entry name" value="PRK12904.1"/>
    <property type="match status" value="1"/>
</dbReference>
<dbReference type="NCBIfam" id="TIGR00963">
    <property type="entry name" value="secA"/>
    <property type="match status" value="1"/>
</dbReference>
<dbReference type="PANTHER" id="PTHR30612:SF0">
    <property type="entry name" value="CHLOROPLAST PROTEIN-TRANSPORTING ATPASE"/>
    <property type="match status" value="1"/>
</dbReference>
<dbReference type="PANTHER" id="PTHR30612">
    <property type="entry name" value="SECA INNER MEMBRANE COMPONENT OF SEC PROTEIN SECRETION SYSTEM"/>
    <property type="match status" value="1"/>
</dbReference>
<dbReference type="Pfam" id="PF21090">
    <property type="entry name" value="P-loop_SecA"/>
    <property type="match status" value="2"/>
</dbReference>
<dbReference type="Pfam" id="PF07517">
    <property type="entry name" value="SecA_DEAD"/>
    <property type="match status" value="1"/>
</dbReference>
<dbReference type="Pfam" id="PF01043">
    <property type="entry name" value="SecA_PP_bind"/>
    <property type="match status" value="1"/>
</dbReference>
<dbReference type="Pfam" id="PF07516">
    <property type="entry name" value="SecA_SW"/>
    <property type="match status" value="1"/>
</dbReference>
<dbReference type="PRINTS" id="PR00906">
    <property type="entry name" value="SECA"/>
</dbReference>
<dbReference type="SMART" id="SM00490">
    <property type="entry name" value="HELICc"/>
    <property type="match status" value="1"/>
</dbReference>
<dbReference type="SMART" id="SM00957">
    <property type="entry name" value="SecA_DEAD"/>
    <property type="match status" value="1"/>
</dbReference>
<dbReference type="SMART" id="SM00958">
    <property type="entry name" value="SecA_PP_bind"/>
    <property type="match status" value="1"/>
</dbReference>
<dbReference type="SUPFAM" id="SSF81886">
    <property type="entry name" value="Helical scaffold and wing domains of SecA"/>
    <property type="match status" value="1"/>
</dbReference>
<dbReference type="SUPFAM" id="SSF52540">
    <property type="entry name" value="P-loop containing nucleoside triphosphate hydrolases"/>
    <property type="match status" value="2"/>
</dbReference>
<dbReference type="SUPFAM" id="SSF81767">
    <property type="entry name" value="Pre-protein crosslinking domain of SecA"/>
    <property type="match status" value="1"/>
</dbReference>
<dbReference type="PROSITE" id="PS01312">
    <property type="entry name" value="SECA"/>
    <property type="match status" value="1"/>
</dbReference>
<dbReference type="PROSITE" id="PS51196">
    <property type="entry name" value="SECA_MOTOR_DEAD"/>
    <property type="match status" value="1"/>
</dbReference>
<comment type="function">
    <text evidence="1">Part of the Sec protein translocase complex. Interacts with the SecYEG preprotein conducting channel. Has a central role in coupling the hydrolysis of ATP to the transfer of proteins into and across the cell membrane, serving as an ATP-driven molecular motor driving the stepwise translocation of polypeptide chains across the membrane.</text>
</comment>
<comment type="catalytic activity">
    <reaction evidence="1">
        <text>ATP + H2O + cellular proteinSide 1 = ADP + phosphate + cellular proteinSide 2.</text>
        <dbReference type="EC" id="7.4.2.8"/>
    </reaction>
</comment>
<comment type="subunit">
    <text evidence="1">Monomer and homodimer. Part of the essential Sec protein translocation apparatus which comprises SecA, SecYEG and auxiliary proteins SecDF. Other proteins may also be involved.</text>
</comment>
<comment type="subcellular location">
    <subcellularLocation>
        <location evidence="1">Cell membrane</location>
        <topology evidence="1">Peripheral membrane protein</topology>
        <orientation evidence="1">Cytoplasmic side</orientation>
    </subcellularLocation>
    <subcellularLocation>
        <location evidence="1">Cytoplasm</location>
    </subcellularLocation>
    <text evidence="1">Distribution is 50-50.</text>
</comment>
<comment type="similarity">
    <text evidence="1">Belongs to the SecA family.</text>
</comment>
<reference key="1">
    <citation type="journal article" date="2004" name="Proc. Natl. Acad. Sci. U.S.A.">
        <title>The genome sequence of the probiotic intestinal bacterium Lactobacillus johnsonii NCC 533.</title>
        <authorList>
            <person name="Pridmore R.D."/>
            <person name="Berger B."/>
            <person name="Desiere F."/>
            <person name="Vilanova D."/>
            <person name="Barretto C."/>
            <person name="Pittet A.-C."/>
            <person name="Zwahlen M.-C."/>
            <person name="Rouvet M."/>
            <person name="Altermann E."/>
            <person name="Barrangou R."/>
            <person name="Mollet B."/>
            <person name="Mercenier A."/>
            <person name="Klaenhammer T."/>
            <person name="Arigoni F."/>
            <person name="Schell M.A."/>
        </authorList>
    </citation>
    <scope>NUCLEOTIDE SEQUENCE [LARGE SCALE GENOMIC DNA]</scope>
    <source>
        <strain>CNCM I-1225 / La1 / NCC 533</strain>
    </source>
</reference>
<proteinExistence type="inferred from homology"/>
<accession>Q74KA5</accession>
<organism>
    <name type="scientific">Lactobacillus johnsonii (strain CNCM I-12250 / La1 / NCC 533)</name>
    <dbReference type="NCBI Taxonomy" id="257314"/>
    <lineage>
        <taxon>Bacteria</taxon>
        <taxon>Bacillati</taxon>
        <taxon>Bacillota</taxon>
        <taxon>Bacilli</taxon>
        <taxon>Lactobacillales</taxon>
        <taxon>Lactobacillaceae</taxon>
        <taxon>Lactobacillus</taxon>
    </lineage>
</organism>
<protein>
    <recommendedName>
        <fullName evidence="1">Protein translocase subunit SecA 1</fullName>
        <ecNumber evidence="1">7.4.2.8</ecNumber>
    </recommendedName>
</protein>
<sequence length="799" mass="91575">MANILKKIYDNDRRELKKFEKLATKVESLGDEYEKLSDEQLQAKTPEFRKRLKNGETLDDILPEAFATAREGAKRVLGLYPFRVQIIGGIALHYGNIAEMMTGEGKTLTATLPVYLNALTGKGVHVVTVNEYLSSRDESEMGQLYKWLGLSVGLNLNSMSADEKRDAYNCDVTYSTNSELGFDYLRDNMVVYKDQMVQRPLNYAIIDEVDSILIDEARTPLIISGQAEQANSEYIRADRFVKTLVEDKSDDDVDDDEDHGDYKIDWPTKTINLTNQGIKKACEHFGLKNLYDIDNQVLVHHIDQALRANYIMLKDIDYVVQNGEVMIVDSFTGRVMEGRRYSDGLHQAIEAKEGVKIQEESKTQATITYQNFFRMYKKLAGMTGTAKTEEEEFREIYNMEVITIPTNRPIARKDLPDILYPTLDSKFEAVVKEIKERHAKGQPVLVGTVAIESSERLSQMLNQAGIPHAVLNAKNHAKEAEIIMNAGQRGAVTIATNMAGRGTDIKLGPGVKELGGLAVIGTERHESRRIDNQLRGRSGRQGDPGVTRFYLSLEDDLMKRFGGDRVKLFLDRISDNDDDKVIESRMITKQVESAQKRVEGNNYDTRKQTLQYDDVMRTQREIIYGERMQVISEDKSLKPVLMPMIKRTIDHQIDMYTQGDKKDWRNDQIRDFISSAITDEETTKKLNMKHLSAEELKKRLYQIAEDNYAEKEKQLADPEQMLEFEKVVILRVVDERWTDHIDAMDQLRQSISLRGYGQLNPLVEYQESGYRMFEEMISNIEFDATRLFMKAQIRQNISR</sequence>
<gene>
    <name evidence="1" type="primary">secA1</name>
    <name type="ordered locus">LJ_0846</name>
</gene>
<evidence type="ECO:0000255" key="1">
    <source>
        <dbReference type="HAMAP-Rule" id="MF_01382"/>
    </source>
</evidence>
<feature type="chain" id="PRO_0000320836" description="Protein translocase subunit SecA 1">
    <location>
        <begin position="1"/>
        <end position="799"/>
    </location>
</feature>
<feature type="binding site" evidence="1">
    <location>
        <position position="85"/>
    </location>
    <ligand>
        <name>ATP</name>
        <dbReference type="ChEBI" id="CHEBI:30616"/>
    </ligand>
</feature>
<feature type="binding site" evidence="1">
    <location>
        <begin position="103"/>
        <end position="107"/>
    </location>
    <ligand>
        <name>ATP</name>
        <dbReference type="ChEBI" id="CHEBI:30616"/>
    </ligand>
</feature>
<feature type="binding site" evidence="1">
    <location>
        <position position="504"/>
    </location>
    <ligand>
        <name>ATP</name>
        <dbReference type="ChEBI" id="CHEBI:30616"/>
    </ligand>
</feature>